<protein>
    <recommendedName>
        <fullName evidence="1">Transcriptional repressor NrdR</fullName>
    </recommendedName>
</protein>
<sequence length="161" mass="18564">MRCPSCSSLDTQVKDSRPTEDSAVIRRRRVCMACNFRFTTFERVQLRELTVIKRNGRRVPFDRDKLVRSVQISLRKRPVEPEKVEKMVSAIVRELESAGEAEISSEAIGEIVMEHLRKLDDVAYVRFASVYRNFREAKDFEAVLGELSGDEMARLAALRLK</sequence>
<feature type="chain" id="PRO_0000264202" description="Transcriptional repressor NrdR">
    <location>
        <begin position="1"/>
        <end position="161"/>
    </location>
</feature>
<feature type="domain" description="ATP-cone" evidence="1">
    <location>
        <begin position="49"/>
        <end position="139"/>
    </location>
</feature>
<feature type="zinc finger region" evidence="1">
    <location>
        <begin position="3"/>
        <end position="34"/>
    </location>
</feature>
<feature type="region of interest" description="Disordered" evidence="2">
    <location>
        <begin position="1"/>
        <end position="20"/>
    </location>
</feature>
<feature type="compositionally biased region" description="Polar residues" evidence="2">
    <location>
        <begin position="1"/>
        <end position="11"/>
    </location>
</feature>
<gene>
    <name evidence="1" type="primary">nrdR</name>
    <name type="ordered locus">RPC_2660</name>
</gene>
<organism>
    <name type="scientific">Rhodopseudomonas palustris (strain BisB18)</name>
    <dbReference type="NCBI Taxonomy" id="316056"/>
    <lineage>
        <taxon>Bacteria</taxon>
        <taxon>Pseudomonadati</taxon>
        <taxon>Pseudomonadota</taxon>
        <taxon>Alphaproteobacteria</taxon>
        <taxon>Hyphomicrobiales</taxon>
        <taxon>Nitrobacteraceae</taxon>
        <taxon>Rhodopseudomonas</taxon>
    </lineage>
</organism>
<dbReference type="EMBL" id="CP000301">
    <property type="protein sequence ID" value="ABD88210.1"/>
    <property type="molecule type" value="Genomic_DNA"/>
</dbReference>
<dbReference type="SMR" id="Q214H6"/>
<dbReference type="STRING" id="316056.RPC_2660"/>
<dbReference type="KEGG" id="rpc:RPC_2660"/>
<dbReference type="eggNOG" id="COG1327">
    <property type="taxonomic scope" value="Bacteria"/>
</dbReference>
<dbReference type="HOGENOM" id="CLU_108412_0_1_5"/>
<dbReference type="OrthoDB" id="9807461at2"/>
<dbReference type="GO" id="GO:0005524">
    <property type="term" value="F:ATP binding"/>
    <property type="evidence" value="ECO:0007669"/>
    <property type="project" value="UniProtKB-KW"/>
</dbReference>
<dbReference type="GO" id="GO:0003677">
    <property type="term" value="F:DNA binding"/>
    <property type="evidence" value="ECO:0007669"/>
    <property type="project" value="UniProtKB-KW"/>
</dbReference>
<dbReference type="GO" id="GO:0008270">
    <property type="term" value="F:zinc ion binding"/>
    <property type="evidence" value="ECO:0007669"/>
    <property type="project" value="UniProtKB-UniRule"/>
</dbReference>
<dbReference type="GO" id="GO:0045892">
    <property type="term" value="P:negative regulation of DNA-templated transcription"/>
    <property type="evidence" value="ECO:0007669"/>
    <property type="project" value="UniProtKB-UniRule"/>
</dbReference>
<dbReference type="HAMAP" id="MF_00440">
    <property type="entry name" value="NrdR"/>
    <property type="match status" value="1"/>
</dbReference>
<dbReference type="InterPro" id="IPR005144">
    <property type="entry name" value="ATP-cone_dom"/>
</dbReference>
<dbReference type="InterPro" id="IPR055173">
    <property type="entry name" value="NrdR-like_N"/>
</dbReference>
<dbReference type="InterPro" id="IPR003796">
    <property type="entry name" value="RNR_NrdR-like"/>
</dbReference>
<dbReference type="NCBIfam" id="TIGR00244">
    <property type="entry name" value="transcriptional regulator NrdR"/>
    <property type="match status" value="1"/>
</dbReference>
<dbReference type="PANTHER" id="PTHR30455">
    <property type="entry name" value="TRANSCRIPTIONAL REPRESSOR NRDR"/>
    <property type="match status" value="1"/>
</dbReference>
<dbReference type="PANTHER" id="PTHR30455:SF2">
    <property type="entry name" value="TRANSCRIPTIONAL REPRESSOR NRDR"/>
    <property type="match status" value="1"/>
</dbReference>
<dbReference type="Pfam" id="PF03477">
    <property type="entry name" value="ATP-cone"/>
    <property type="match status" value="1"/>
</dbReference>
<dbReference type="Pfam" id="PF22811">
    <property type="entry name" value="Zn_ribbon_NrdR"/>
    <property type="match status" value="1"/>
</dbReference>
<dbReference type="PROSITE" id="PS51161">
    <property type="entry name" value="ATP_CONE"/>
    <property type="match status" value="1"/>
</dbReference>
<accession>Q214H6</accession>
<reference key="1">
    <citation type="submission" date="2006-03" db="EMBL/GenBank/DDBJ databases">
        <title>Complete sequence of Rhodopseudomonas palustris BisB18.</title>
        <authorList>
            <consortium name="US DOE Joint Genome Institute"/>
            <person name="Copeland A."/>
            <person name="Lucas S."/>
            <person name="Lapidus A."/>
            <person name="Barry K."/>
            <person name="Detter J.C."/>
            <person name="Glavina del Rio T."/>
            <person name="Hammon N."/>
            <person name="Israni S."/>
            <person name="Dalin E."/>
            <person name="Tice H."/>
            <person name="Pitluck S."/>
            <person name="Chain P."/>
            <person name="Malfatti S."/>
            <person name="Shin M."/>
            <person name="Vergez L."/>
            <person name="Schmutz J."/>
            <person name="Larimer F."/>
            <person name="Land M."/>
            <person name="Hauser L."/>
            <person name="Pelletier D.A."/>
            <person name="Kyrpides N."/>
            <person name="Anderson I."/>
            <person name="Oda Y."/>
            <person name="Harwood C.S."/>
            <person name="Richardson P."/>
        </authorList>
    </citation>
    <scope>NUCLEOTIDE SEQUENCE [LARGE SCALE GENOMIC DNA]</scope>
    <source>
        <strain>BisB18</strain>
    </source>
</reference>
<name>NRDR_RHOPB</name>
<keyword id="KW-0067">ATP-binding</keyword>
<keyword id="KW-0238">DNA-binding</keyword>
<keyword id="KW-0479">Metal-binding</keyword>
<keyword id="KW-0547">Nucleotide-binding</keyword>
<keyword id="KW-0678">Repressor</keyword>
<keyword id="KW-0804">Transcription</keyword>
<keyword id="KW-0805">Transcription regulation</keyword>
<keyword id="KW-0862">Zinc</keyword>
<keyword id="KW-0863">Zinc-finger</keyword>
<evidence type="ECO:0000255" key="1">
    <source>
        <dbReference type="HAMAP-Rule" id="MF_00440"/>
    </source>
</evidence>
<evidence type="ECO:0000256" key="2">
    <source>
        <dbReference type="SAM" id="MobiDB-lite"/>
    </source>
</evidence>
<proteinExistence type="inferred from homology"/>
<comment type="function">
    <text evidence="1">Negatively regulates transcription of bacterial ribonucleotide reductase nrd genes and operons by binding to NrdR-boxes.</text>
</comment>
<comment type="cofactor">
    <cofactor evidence="1">
        <name>Zn(2+)</name>
        <dbReference type="ChEBI" id="CHEBI:29105"/>
    </cofactor>
    <text evidence="1">Binds 1 zinc ion.</text>
</comment>
<comment type="similarity">
    <text evidence="1">Belongs to the NrdR family.</text>
</comment>